<comment type="function">
    <text evidence="1">Can catalyze the hydrolysis of ATP in the presence of single-stranded DNA, the ATP-dependent uptake of single-stranded DNA by duplex DNA, and the ATP-dependent hybridization of homologous single-stranded DNAs. It interacts with LexA causing its activation and leading to its autocatalytic cleavage (By similarity).</text>
</comment>
<comment type="subcellular location">
    <subcellularLocation>
        <location evidence="1">Cytoplasm</location>
    </subcellularLocation>
</comment>
<comment type="PTM">
    <text evidence="1">This protein undergoes a protein self splicing that involves a post-translational excision of the intervening region (intein) followed by peptide ligation.</text>
</comment>
<comment type="similarity">
    <text evidence="3">Belongs to the RecA family.</text>
</comment>
<protein>
    <recommendedName>
        <fullName>Protein RecA</fullName>
    </recommendedName>
    <alternativeName>
        <fullName>Recombinase A</fullName>
    </alternativeName>
    <component>
        <recommendedName>
            <fullName>Mfl RecA intein</fullName>
        </recommendedName>
    </component>
</protein>
<proteinExistence type="inferred from homology"/>
<feature type="chain" id="PRO_0000030254" description="Protein RecA, 1st part" evidence="2">
    <location>
        <begin position="1" status="less than"/>
        <end position="9"/>
    </location>
</feature>
<feature type="chain" id="PRO_0000030255" description="Mfl RecA intein" evidence="2">
    <location>
        <begin position="10"/>
        <end position="373"/>
    </location>
</feature>
<feature type="chain" id="PRO_0000030256" description="Protein RecA, 2nd part" evidence="2">
    <location>
        <begin position="374"/>
        <end position="423" status="greater than"/>
    </location>
</feature>
<feature type="non-terminal residue">
    <location>
        <position position="1"/>
    </location>
</feature>
<feature type="non-terminal residue">
    <location>
        <position position="423"/>
    </location>
</feature>
<organism>
    <name type="scientific">Mycolicibacterium flavescens</name>
    <name type="common">Mycobacterium flavescens</name>
    <dbReference type="NCBI Taxonomy" id="1776"/>
    <lineage>
        <taxon>Bacteria</taxon>
        <taxon>Bacillati</taxon>
        <taxon>Actinomycetota</taxon>
        <taxon>Actinomycetes</taxon>
        <taxon>Mycobacteriales</taxon>
        <taxon>Mycobacteriaceae</taxon>
        <taxon>Mycolicibacterium</taxon>
    </lineage>
</organism>
<keyword id="KW-0067">ATP-binding</keyword>
<keyword id="KW-0068">Autocatalytic cleavage</keyword>
<keyword id="KW-0963">Cytoplasm</keyword>
<keyword id="KW-0227">DNA damage</keyword>
<keyword id="KW-0233">DNA recombination</keyword>
<keyword id="KW-0234">DNA repair</keyword>
<keyword id="KW-0238">DNA-binding</keyword>
<keyword id="KW-0547">Nucleotide-binding</keyword>
<keyword id="KW-0651">Protein splicing</keyword>
<keyword id="KW-0742">SOS response</keyword>
<gene>
    <name type="primary">recA</name>
</gene>
<evidence type="ECO:0000250" key="1"/>
<evidence type="ECO:0000255" key="2"/>
<evidence type="ECO:0000305" key="3"/>
<name>RECA_MYCFV</name>
<sequence length="423" mass="47333">REKIGVMFGCFNYSTRVQLADRTTEKIGKIVTQKMDVEVLSYDPDTDRVVPRKVVNWFNNGPAEQFLQFTVEKSGGNGKSQFAATPNHLIRTPGGWTEAGDLIAGDRVMATEPHRLSDQQFQVVLGSLMGDGNLSPNRRDRNGVRFRMGHGAKQVDYLRWKTELLGNIKHSTRVNDKGATFVDFTPLPELAELQRAVYLGDGKKFLSEEYLKALTPLALAIWYMDDGAFTVRSKGLQERTAGGSGRIEICVEAMSEGTRVRLRDYLHDTHGLEVRLRQSGKAGKAVLVFSTASSAKFQELVAPYMAPSMEYKLLPRFRGQSTVSPQFVESTQRLVPARILDVHVKPHTRSMNRFDIEVEGNHNYFVDGVMVHNSPETTTGGKALKFYASVRMDVRRIETLKDGXDAVGNRTRVKVVKNKVSPP</sequence>
<accession>Q9F415</accession>
<dbReference type="EMBL" id="AJ251150">
    <property type="protein sequence ID" value="CAC09590.1"/>
    <property type="molecule type" value="Genomic_DNA"/>
</dbReference>
<dbReference type="STRING" id="1776.BHQ18_23685"/>
<dbReference type="GO" id="GO:0005829">
    <property type="term" value="C:cytosol"/>
    <property type="evidence" value="ECO:0007669"/>
    <property type="project" value="TreeGrafter"/>
</dbReference>
<dbReference type="GO" id="GO:0005524">
    <property type="term" value="F:ATP binding"/>
    <property type="evidence" value="ECO:0007669"/>
    <property type="project" value="UniProtKB-KW"/>
</dbReference>
<dbReference type="GO" id="GO:0008094">
    <property type="term" value="F:ATP-dependent activity, acting on DNA"/>
    <property type="evidence" value="ECO:0007669"/>
    <property type="project" value="InterPro"/>
</dbReference>
<dbReference type="GO" id="GO:0004519">
    <property type="term" value="F:endonuclease activity"/>
    <property type="evidence" value="ECO:0007669"/>
    <property type="project" value="InterPro"/>
</dbReference>
<dbReference type="GO" id="GO:0003697">
    <property type="term" value="F:single-stranded DNA binding"/>
    <property type="evidence" value="ECO:0007669"/>
    <property type="project" value="InterPro"/>
</dbReference>
<dbReference type="GO" id="GO:0006310">
    <property type="term" value="P:DNA recombination"/>
    <property type="evidence" value="ECO:0007669"/>
    <property type="project" value="UniProtKB-KW"/>
</dbReference>
<dbReference type="GO" id="GO:0006281">
    <property type="term" value="P:DNA repair"/>
    <property type="evidence" value="ECO:0007669"/>
    <property type="project" value="UniProtKB-KW"/>
</dbReference>
<dbReference type="GO" id="GO:0016539">
    <property type="term" value="P:intein-mediated protein splicing"/>
    <property type="evidence" value="ECO:0007669"/>
    <property type="project" value="InterPro"/>
</dbReference>
<dbReference type="GO" id="GO:0009432">
    <property type="term" value="P:SOS response"/>
    <property type="evidence" value="ECO:0007669"/>
    <property type="project" value="UniProtKB-KW"/>
</dbReference>
<dbReference type="CDD" id="cd00081">
    <property type="entry name" value="Hint"/>
    <property type="match status" value="1"/>
</dbReference>
<dbReference type="Gene3D" id="2.170.16.10">
    <property type="entry name" value="Hedgehog/Intein (Hint) domain"/>
    <property type="match status" value="1"/>
</dbReference>
<dbReference type="Gene3D" id="3.10.28.10">
    <property type="entry name" value="Homing endonucleases"/>
    <property type="match status" value="2"/>
</dbReference>
<dbReference type="Gene3D" id="3.40.50.300">
    <property type="entry name" value="P-loop containing nucleotide triphosphate hydrolases"/>
    <property type="match status" value="1"/>
</dbReference>
<dbReference type="InterPro" id="IPR013765">
    <property type="entry name" value="DNA_recomb/repair_RecA"/>
</dbReference>
<dbReference type="InterPro" id="IPR020584">
    <property type="entry name" value="DNA_recomb/repair_RecA_CS"/>
</dbReference>
<dbReference type="InterPro" id="IPR003586">
    <property type="entry name" value="Hint_dom_C"/>
</dbReference>
<dbReference type="InterPro" id="IPR003587">
    <property type="entry name" value="Hint_dom_N"/>
</dbReference>
<dbReference type="InterPro" id="IPR036844">
    <property type="entry name" value="Hint_dom_sf"/>
</dbReference>
<dbReference type="InterPro" id="IPR027434">
    <property type="entry name" value="Homing_endonucl"/>
</dbReference>
<dbReference type="InterPro" id="IPR006142">
    <property type="entry name" value="INTEIN"/>
</dbReference>
<dbReference type="InterPro" id="IPR030934">
    <property type="entry name" value="Intein_C"/>
</dbReference>
<dbReference type="InterPro" id="IPR006141">
    <property type="entry name" value="Intein_N"/>
</dbReference>
<dbReference type="InterPro" id="IPR004860">
    <property type="entry name" value="LAGLIDADG_dom"/>
</dbReference>
<dbReference type="InterPro" id="IPR027417">
    <property type="entry name" value="P-loop_NTPase"/>
</dbReference>
<dbReference type="InterPro" id="IPR049428">
    <property type="entry name" value="RecA-like_N"/>
</dbReference>
<dbReference type="InterPro" id="IPR020587">
    <property type="entry name" value="RecA_monomer-monomer_interface"/>
</dbReference>
<dbReference type="NCBIfam" id="TIGR01443">
    <property type="entry name" value="intein_Cterm"/>
    <property type="match status" value="1"/>
</dbReference>
<dbReference type="NCBIfam" id="TIGR01445">
    <property type="entry name" value="intein_Nterm"/>
    <property type="match status" value="1"/>
</dbReference>
<dbReference type="PANTHER" id="PTHR45900:SF1">
    <property type="entry name" value="MITOCHONDRIAL DNA REPAIR PROTEIN RECA HOMOLOG-RELATED"/>
    <property type="match status" value="1"/>
</dbReference>
<dbReference type="PANTHER" id="PTHR45900">
    <property type="entry name" value="RECA"/>
    <property type="match status" value="1"/>
</dbReference>
<dbReference type="Pfam" id="PF03161">
    <property type="entry name" value="LAGLIDADG_2"/>
    <property type="match status" value="1"/>
</dbReference>
<dbReference type="Pfam" id="PF00154">
    <property type="entry name" value="RecA"/>
    <property type="match status" value="1"/>
</dbReference>
<dbReference type="PRINTS" id="PR00379">
    <property type="entry name" value="INTEIN"/>
</dbReference>
<dbReference type="PRINTS" id="PR00142">
    <property type="entry name" value="RECA"/>
</dbReference>
<dbReference type="SMART" id="SM00305">
    <property type="entry name" value="HintC"/>
    <property type="match status" value="1"/>
</dbReference>
<dbReference type="SMART" id="SM00306">
    <property type="entry name" value="HintN"/>
    <property type="match status" value="1"/>
</dbReference>
<dbReference type="SUPFAM" id="SSF51294">
    <property type="entry name" value="Hedgehog/intein (Hint) domain"/>
    <property type="match status" value="1"/>
</dbReference>
<dbReference type="SUPFAM" id="SSF55608">
    <property type="entry name" value="Homing endonucleases"/>
    <property type="match status" value="1"/>
</dbReference>
<dbReference type="SUPFAM" id="SSF52540">
    <property type="entry name" value="P-loop containing nucleoside triphosphate hydrolases"/>
    <property type="match status" value="1"/>
</dbReference>
<dbReference type="PROSITE" id="PS50818">
    <property type="entry name" value="INTEIN_C_TER"/>
    <property type="match status" value="1"/>
</dbReference>
<dbReference type="PROSITE" id="PS50817">
    <property type="entry name" value="INTEIN_N_TER"/>
    <property type="match status" value="1"/>
</dbReference>
<dbReference type="PROSITE" id="PS00321">
    <property type="entry name" value="RECA_1"/>
    <property type="match status" value="1"/>
</dbReference>
<dbReference type="PROSITE" id="PS50163">
    <property type="entry name" value="RECA_3"/>
    <property type="match status" value="1"/>
</dbReference>
<reference key="1">
    <citation type="journal article" date="2000" name="FEBS Lett.">
        <title>Inteins invading mycobacterial RecA proteins.</title>
        <authorList>
            <person name="Saves I."/>
            <person name="Laneelle M.-A."/>
            <person name="Daffe M."/>
            <person name="Masson J.-M."/>
        </authorList>
    </citation>
    <scope>NUCLEOTIDE SEQUENCE [GENOMIC DNA]</scope>
    <source>
        <strain>ATCC 14474 / DSM 43991 / NCTC 10271 / NRRL B-4038 / TMC 1541</strain>
    </source>
</reference>